<proteinExistence type="inferred from homology"/>
<evidence type="ECO:0000255" key="1">
    <source>
        <dbReference type="HAMAP-Rule" id="MF_00184"/>
    </source>
</evidence>
<feature type="chain" id="PRO_1000020425" description="Threonine--tRNA ligase">
    <location>
        <begin position="1"/>
        <end position="614"/>
    </location>
</feature>
<feature type="region of interest" description="Editing domain" evidence="1">
    <location>
        <begin position="1"/>
        <end position="141"/>
    </location>
</feature>
<feature type="region of interest" description="Catalytic" evidence="1">
    <location>
        <begin position="198"/>
        <end position="490"/>
    </location>
</feature>
<feature type="binding site" evidence="1">
    <location>
        <position position="290"/>
    </location>
    <ligand>
        <name>Zn(2+)</name>
        <dbReference type="ChEBI" id="CHEBI:29105"/>
    </ligand>
</feature>
<feature type="binding site" evidence="1">
    <location>
        <position position="342"/>
    </location>
    <ligand>
        <name>Zn(2+)</name>
        <dbReference type="ChEBI" id="CHEBI:29105"/>
    </ligand>
</feature>
<feature type="binding site" evidence="1">
    <location>
        <position position="463"/>
    </location>
    <ligand>
        <name>Zn(2+)</name>
        <dbReference type="ChEBI" id="CHEBI:29105"/>
    </ligand>
</feature>
<accession>A7I6P0</accession>
<organism>
    <name type="scientific">Methanoregula boonei (strain DSM 21154 / JCM 14090 / 6A8)</name>
    <dbReference type="NCBI Taxonomy" id="456442"/>
    <lineage>
        <taxon>Archaea</taxon>
        <taxon>Methanobacteriati</taxon>
        <taxon>Methanobacteriota</taxon>
        <taxon>Stenosarchaea group</taxon>
        <taxon>Methanomicrobia</taxon>
        <taxon>Methanomicrobiales</taxon>
        <taxon>Methanoregulaceae</taxon>
        <taxon>Methanoregula</taxon>
    </lineage>
</organism>
<reference key="1">
    <citation type="journal article" date="2015" name="Microbiology">
        <title>Genome of Methanoregula boonei 6A8 reveals adaptations to oligotrophic peatland environments.</title>
        <authorList>
            <person name="Braeuer S."/>
            <person name="Cadillo-Quiroz H."/>
            <person name="Kyrpides N."/>
            <person name="Woyke T."/>
            <person name="Goodwin L."/>
            <person name="Detter C."/>
            <person name="Podell S."/>
            <person name="Yavitt J.B."/>
            <person name="Zinder S.H."/>
        </authorList>
    </citation>
    <scope>NUCLEOTIDE SEQUENCE [LARGE SCALE GENOMIC DNA]</scope>
    <source>
        <strain>DSM 21154 / JCM 14090 / 6A8</strain>
    </source>
</reference>
<dbReference type="EC" id="6.1.1.3" evidence="1"/>
<dbReference type="EMBL" id="CP000780">
    <property type="protein sequence ID" value="ABS55401.1"/>
    <property type="molecule type" value="Genomic_DNA"/>
</dbReference>
<dbReference type="RefSeq" id="WP_012106425.1">
    <property type="nucleotide sequence ID" value="NC_009712.1"/>
</dbReference>
<dbReference type="SMR" id="A7I6P0"/>
<dbReference type="STRING" id="456442.Mboo_0883"/>
<dbReference type="GeneID" id="5410764"/>
<dbReference type="KEGG" id="mbn:Mboo_0883"/>
<dbReference type="eggNOG" id="arCOG00401">
    <property type="taxonomic scope" value="Archaea"/>
</dbReference>
<dbReference type="HOGENOM" id="CLU_029833_0_0_2"/>
<dbReference type="OrthoDB" id="372136at2157"/>
<dbReference type="Proteomes" id="UP000002408">
    <property type="component" value="Chromosome"/>
</dbReference>
<dbReference type="GO" id="GO:0005737">
    <property type="term" value="C:cytoplasm"/>
    <property type="evidence" value="ECO:0007669"/>
    <property type="project" value="UniProtKB-SubCell"/>
</dbReference>
<dbReference type="GO" id="GO:0005524">
    <property type="term" value="F:ATP binding"/>
    <property type="evidence" value="ECO:0007669"/>
    <property type="project" value="UniProtKB-UniRule"/>
</dbReference>
<dbReference type="GO" id="GO:0004829">
    <property type="term" value="F:threonine-tRNA ligase activity"/>
    <property type="evidence" value="ECO:0007669"/>
    <property type="project" value="UniProtKB-UniRule"/>
</dbReference>
<dbReference type="GO" id="GO:0000049">
    <property type="term" value="F:tRNA binding"/>
    <property type="evidence" value="ECO:0007669"/>
    <property type="project" value="UniProtKB-KW"/>
</dbReference>
<dbReference type="GO" id="GO:0008270">
    <property type="term" value="F:zinc ion binding"/>
    <property type="evidence" value="ECO:0007669"/>
    <property type="project" value="InterPro"/>
</dbReference>
<dbReference type="GO" id="GO:0006435">
    <property type="term" value="P:threonyl-tRNA aminoacylation"/>
    <property type="evidence" value="ECO:0007669"/>
    <property type="project" value="UniProtKB-UniRule"/>
</dbReference>
<dbReference type="CDD" id="cd00860">
    <property type="entry name" value="ThrRS_anticodon"/>
    <property type="match status" value="1"/>
</dbReference>
<dbReference type="FunFam" id="3.40.50.800:FF:000001">
    <property type="entry name" value="Threonine--tRNA ligase"/>
    <property type="match status" value="1"/>
</dbReference>
<dbReference type="FunFam" id="3.50.80.10:FF:000004">
    <property type="entry name" value="Threonine--tRNA ligase"/>
    <property type="match status" value="1"/>
</dbReference>
<dbReference type="Gene3D" id="3.40.50.800">
    <property type="entry name" value="Anticodon-binding domain"/>
    <property type="match status" value="1"/>
</dbReference>
<dbReference type="Gene3D" id="3.30.930.10">
    <property type="entry name" value="Bira Bifunctional Protein, Domain 2"/>
    <property type="match status" value="1"/>
</dbReference>
<dbReference type="Gene3D" id="3.50.80.10">
    <property type="entry name" value="D-tyrosyl-tRNA(Tyr) deacylase"/>
    <property type="match status" value="1"/>
</dbReference>
<dbReference type="HAMAP" id="MF_00184">
    <property type="entry name" value="Thr_tRNA_synth"/>
    <property type="match status" value="1"/>
</dbReference>
<dbReference type="InterPro" id="IPR002314">
    <property type="entry name" value="aa-tRNA-synt_IIb"/>
</dbReference>
<dbReference type="InterPro" id="IPR006195">
    <property type="entry name" value="aa-tRNA-synth_II"/>
</dbReference>
<dbReference type="InterPro" id="IPR045864">
    <property type="entry name" value="aa-tRNA-synth_II/BPL/LPL"/>
</dbReference>
<dbReference type="InterPro" id="IPR004154">
    <property type="entry name" value="Anticodon-bd"/>
</dbReference>
<dbReference type="InterPro" id="IPR036621">
    <property type="entry name" value="Anticodon-bd_dom_sf"/>
</dbReference>
<dbReference type="InterPro" id="IPR023509">
    <property type="entry name" value="DTD-like_sf"/>
</dbReference>
<dbReference type="InterPro" id="IPR002320">
    <property type="entry name" value="Thr-tRNA-ligase_IIa"/>
</dbReference>
<dbReference type="InterPro" id="IPR015011">
    <property type="entry name" value="Threonyl-tRNA_syn_edit_dom_arc"/>
</dbReference>
<dbReference type="InterPro" id="IPR047246">
    <property type="entry name" value="ThrRS_anticodon"/>
</dbReference>
<dbReference type="NCBIfam" id="NF003068">
    <property type="entry name" value="PRK03991.1"/>
    <property type="match status" value="1"/>
</dbReference>
<dbReference type="NCBIfam" id="TIGR00418">
    <property type="entry name" value="thrS"/>
    <property type="match status" value="1"/>
</dbReference>
<dbReference type="PANTHER" id="PTHR11451:SF44">
    <property type="entry name" value="THREONINE--TRNA LIGASE, CHLOROPLASTIC_MITOCHONDRIAL 2"/>
    <property type="match status" value="1"/>
</dbReference>
<dbReference type="PANTHER" id="PTHR11451">
    <property type="entry name" value="THREONINE-TRNA LIGASE"/>
    <property type="match status" value="1"/>
</dbReference>
<dbReference type="Pfam" id="PF03129">
    <property type="entry name" value="HGTP_anticodon"/>
    <property type="match status" value="1"/>
</dbReference>
<dbReference type="Pfam" id="PF00587">
    <property type="entry name" value="tRNA-synt_2b"/>
    <property type="match status" value="1"/>
</dbReference>
<dbReference type="Pfam" id="PF08915">
    <property type="entry name" value="tRNA-Thr_ED"/>
    <property type="match status" value="1"/>
</dbReference>
<dbReference type="PRINTS" id="PR01047">
    <property type="entry name" value="TRNASYNTHTHR"/>
</dbReference>
<dbReference type="SUPFAM" id="SSF52954">
    <property type="entry name" value="Class II aaRS ABD-related"/>
    <property type="match status" value="1"/>
</dbReference>
<dbReference type="SUPFAM" id="SSF55681">
    <property type="entry name" value="Class II aaRS and biotin synthetases"/>
    <property type="match status" value="1"/>
</dbReference>
<dbReference type="PROSITE" id="PS50862">
    <property type="entry name" value="AA_TRNA_LIGASE_II"/>
    <property type="match status" value="1"/>
</dbReference>
<comment type="function">
    <text evidence="1">Catalyzes the attachment of threonine to tRNA(Thr) in a two-step reaction: L-threonine is first activated by ATP to form Thr-AMP and then transferred to the acceptor end of tRNA(Thr). Also edits incorrectly charged L-seryl-tRNA(Thr).</text>
</comment>
<comment type="catalytic activity">
    <reaction evidence="1">
        <text>tRNA(Thr) + L-threonine + ATP = L-threonyl-tRNA(Thr) + AMP + diphosphate + H(+)</text>
        <dbReference type="Rhea" id="RHEA:24624"/>
        <dbReference type="Rhea" id="RHEA-COMP:9670"/>
        <dbReference type="Rhea" id="RHEA-COMP:9704"/>
        <dbReference type="ChEBI" id="CHEBI:15378"/>
        <dbReference type="ChEBI" id="CHEBI:30616"/>
        <dbReference type="ChEBI" id="CHEBI:33019"/>
        <dbReference type="ChEBI" id="CHEBI:57926"/>
        <dbReference type="ChEBI" id="CHEBI:78442"/>
        <dbReference type="ChEBI" id="CHEBI:78534"/>
        <dbReference type="ChEBI" id="CHEBI:456215"/>
        <dbReference type="EC" id="6.1.1.3"/>
    </reaction>
</comment>
<comment type="cofactor">
    <cofactor evidence="1">
        <name>Zn(2+)</name>
        <dbReference type="ChEBI" id="CHEBI:29105"/>
    </cofactor>
    <text evidence="1">Binds 1 zinc ion per subunit.</text>
</comment>
<comment type="subunit">
    <text evidence="1">Homodimer.</text>
</comment>
<comment type="subcellular location">
    <subcellularLocation>
        <location evidence="1">Cytoplasm</location>
    </subcellularLocation>
</comment>
<comment type="domain">
    <text evidence="1">The N-terminal domain is an archaea-specific tRNA-editing domain that hydrolyzes incorrectly charged L-seryl-tRNA(Thr). Catalysis of tRNA editing is performed by the charged tRNA itself.</text>
</comment>
<comment type="similarity">
    <text evidence="1">Belongs to the class-II aminoacyl-tRNA synthetase family.</text>
</comment>
<sequence length="614" mass="69552">MRLLLIHSDYIEYEAKKKTKMAEEGAVLSDREEDALTVFTAVESVDEEDTEGVILQAIEEVKKTAGQVHAEKIVIYPYAHLSSDLARPELAVPALNALRDGLAAEGFAVKRAPFGWYKSFKISCKGHPLSELSKTIVPGEEGEVVSKKLGKKEATHDWFVMTPDGKTHDYHKYLDNTPFGCLVKKELGVAEPTGGEPAHVDLMRSKELVDYEPASDVGCMRWMPKGKLIRDLMADYVLALLLPYGATPVETPVMYDLGDKAIYEHADKFGERQYRFKSNNRDMMLRFAACFGMFSIMRDMHISKNTLPMKMYELSTYSFRHEQKGEVIGLKRLRCFTMPDMHSLCTDMPEAMKCFEEQLAIGWQTGRDFETKLVAAFRCTKKFYDENEAWVKKIVKESDCPMLIEILSERVHYWEAKIDLAAIDGQNRPIENPTVQIDVESSTRFNIKYFKDDGTPVYPPILHCSPTGSVERVICAILENISTQKVPALPTWLSPVQARVVPVAERHTAYAQEICDALNAQGIRCDLDERDESVGKKVREAGMDWVPYVIVIGDEEMASKKLTVTIRRKSEPNKPFKEQMTTDALAATIKNETAGKPFRPLYTPRKLSLKARYI</sequence>
<keyword id="KW-0030">Aminoacyl-tRNA synthetase</keyword>
<keyword id="KW-0067">ATP-binding</keyword>
<keyword id="KW-0963">Cytoplasm</keyword>
<keyword id="KW-0436">Ligase</keyword>
<keyword id="KW-0479">Metal-binding</keyword>
<keyword id="KW-0547">Nucleotide-binding</keyword>
<keyword id="KW-0648">Protein biosynthesis</keyword>
<keyword id="KW-1185">Reference proteome</keyword>
<keyword id="KW-0694">RNA-binding</keyword>
<keyword id="KW-0820">tRNA-binding</keyword>
<keyword id="KW-0862">Zinc</keyword>
<name>SYT_METB6</name>
<protein>
    <recommendedName>
        <fullName evidence="1">Threonine--tRNA ligase</fullName>
        <ecNumber evidence="1">6.1.1.3</ecNumber>
    </recommendedName>
    <alternativeName>
        <fullName evidence="1">Threonyl-tRNA synthetase</fullName>
        <shortName evidence="1">ThrRS</shortName>
    </alternativeName>
</protein>
<gene>
    <name evidence="1" type="primary">thrS</name>
    <name type="ordered locus">Mboo_0883</name>
</gene>